<name>CD3D_MOUSE</name>
<dbReference type="EMBL" id="M12729">
    <property type="protein sequence ID" value="AAA37268.1"/>
    <property type="molecule type" value="Genomic_DNA"/>
</dbReference>
<dbReference type="EMBL" id="M12728">
    <property type="protein sequence ID" value="AAA37268.1"/>
    <property type="status" value="JOINED"/>
    <property type="molecule type" value="Genomic_DNA"/>
</dbReference>
<dbReference type="EMBL" id="M18222">
    <property type="protein sequence ID" value="AAA37399.1"/>
    <property type="molecule type" value="Genomic_DNA"/>
</dbReference>
<dbReference type="CCDS" id="CCDS23124.1"/>
<dbReference type="PIR" id="A02246">
    <property type="entry name" value="RWMSD2"/>
</dbReference>
<dbReference type="RefSeq" id="NP_038515.3">
    <property type="nucleotide sequence ID" value="NM_013487.3"/>
</dbReference>
<dbReference type="SMR" id="P04235"/>
<dbReference type="ELM" id="P04235"/>
<dbReference type="FunCoup" id="P04235">
    <property type="interactions" value="175"/>
</dbReference>
<dbReference type="IntAct" id="P04235">
    <property type="interactions" value="1"/>
</dbReference>
<dbReference type="STRING" id="10090.ENSMUSP00000034602"/>
<dbReference type="GlyCosmos" id="P04235">
    <property type="glycosylation" value="3 sites, No reported glycans"/>
</dbReference>
<dbReference type="GlyGen" id="P04235">
    <property type="glycosylation" value="3 sites"/>
</dbReference>
<dbReference type="iPTMnet" id="P04235"/>
<dbReference type="PhosphoSitePlus" id="P04235"/>
<dbReference type="SwissPalm" id="P04235"/>
<dbReference type="PaxDb" id="10090-ENSMUSP00000034602"/>
<dbReference type="ProteomicsDB" id="279967"/>
<dbReference type="ABCD" id="P04235">
    <property type="antibodies" value="1 sequenced antibody"/>
</dbReference>
<dbReference type="Antibodypedia" id="4581">
    <property type="antibodies" value="914 antibodies from 43 providers"/>
</dbReference>
<dbReference type="DNASU" id="12500"/>
<dbReference type="Ensembl" id="ENSMUST00000034602.9">
    <property type="protein sequence ID" value="ENSMUSP00000034602.8"/>
    <property type="gene ID" value="ENSMUSG00000032094.9"/>
</dbReference>
<dbReference type="GeneID" id="12500"/>
<dbReference type="KEGG" id="mmu:12500"/>
<dbReference type="UCSC" id="uc009pey.2">
    <property type="organism name" value="mouse"/>
</dbReference>
<dbReference type="AGR" id="MGI:88331"/>
<dbReference type="CTD" id="915"/>
<dbReference type="MGI" id="MGI:88331">
    <property type="gene designation" value="Cd3d"/>
</dbReference>
<dbReference type="VEuPathDB" id="HostDB:ENSMUSG00000032094"/>
<dbReference type="eggNOG" id="ENOG502S4XC">
    <property type="taxonomic scope" value="Eukaryota"/>
</dbReference>
<dbReference type="GeneTree" id="ENSGT00940000153312"/>
<dbReference type="HOGENOM" id="CLU_115449_0_0_1"/>
<dbReference type="InParanoid" id="P04235"/>
<dbReference type="OMA" id="YQPLRDH"/>
<dbReference type="OrthoDB" id="8941324at2759"/>
<dbReference type="PhylomeDB" id="P04235"/>
<dbReference type="TreeFam" id="TF335892"/>
<dbReference type="Reactome" id="R-MMU-198933">
    <property type="pathway name" value="Immunoregulatory interactions between a Lymphoid and a non-Lymphoid cell"/>
</dbReference>
<dbReference type="Reactome" id="R-MMU-202424">
    <property type="pathway name" value="Downstream TCR signaling"/>
</dbReference>
<dbReference type="Reactome" id="R-MMU-202427">
    <property type="pathway name" value="Phosphorylation of CD3 and TCR zeta chains"/>
</dbReference>
<dbReference type="Reactome" id="R-MMU-202430">
    <property type="pathway name" value="Translocation of ZAP-70 to Immunological synapse"/>
</dbReference>
<dbReference type="Reactome" id="R-MMU-202433">
    <property type="pathway name" value="Generation of second messenger molecules"/>
</dbReference>
<dbReference type="Reactome" id="R-MMU-389948">
    <property type="pathway name" value="Co-inhibition by PD-1"/>
</dbReference>
<dbReference type="Reactome" id="R-MMU-8856825">
    <property type="pathway name" value="Cargo recognition for clathrin-mediated endocytosis"/>
</dbReference>
<dbReference type="Reactome" id="R-MMU-8856828">
    <property type="pathway name" value="Clathrin-mediated endocytosis"/>
</dbReference>
<dbReference type="BioGRID-ORCS" id="12500">
    <property type="hits" value="5 hits in 78 CRISPR screens"/>
</dbReference>
<dbReference type="ChiTaRS" id="Cd3d">
    <property type="organism name" value="mouse"/>
</dbReference>
<dbReference type="PRO" id="PR:P04235"/>
<dbReference type="Proteomes" id="UP000000589">
    <property type="component" value="Chromosome 9"/>
</dbReference>
<dbReference type="RNAct" id="P04235">
    <property type="molecule type" value="protein"/>
</dbReference>
<dbReference type="Bgee" id="ENSMUSG00000032094">
    <property type="expression patterns" value="Expressed in peripheral lymph node and 64 other cell types or tissues"/>
</dbReference>
<dbReference type="ExpressionAtlas" id="P04235">
    <property type="expression patterns" value="baseline and differential"/>
</dbReference>
<dbReference type="GO" id="GO:0042105">
    <property type="term" value="C:alpha-beta T cell receptor complex"/>
    <property type="evidence" value="ECO:0000314"/>
    <property type="project" value="MGI"/>
</dbReference>
<dbReference type="GO" id="GO:0042101">
    <property type="term" value="C:T cell receptor complex"/>
    <property type="evidence" value="ECO:0000266"/>
    <property type="project" value="MGI"/>
</dbReference>
<dbReference type="GO" id="GO:0042802">
    <property type="term" value="F:identical protein binding"/>
    <property type="evidence" value="ECO:0007669"/>
    <property type="project" value="Ensembl"/>
</dbReference>
<dbReference type="GO" id="GO:0004888">
    <property type="term" value="F:transmembrane signaling receptor activity"/>
    <property type="evidence" value="ECO:0007669"/>
    <property type="project" value="InterPro"/>
</dbReference>
<dbReference type="GO" id="GO:0002250">
    <property type="term" value="P:adaptive immune response"/>
    <property type="evidence" value="ECO:0007669"/>
    <property type="project" value="UniProtKB-KW"/>
</dbReference>
<dbReference type="GO" id="GO:0007166">
    <property type="term" value="P:cell surface receptor signaling pathway"/>
    <property type="evidence" value="ECO:0007669"/>
    <property type="project" value="InterPro"/>
</dbReference>
<dbReference type="GO" id="GO:0045059">
    <property type="term" value="P:positive thymic T cell selection"/>
    <property type="evidence" value="ECO:0000315"/>
    <property type="project" value="UniProtKB"/>
</dbReference>
<dbReference type="GO" id="GO:0065003">
    <property type="term" value="P:protein-containing complex assembly"/>
    <property type="evidence" value="ECO:0000303"/>
    <property type="project" value="UniProtKB"/>
</dbReference>
<dbReference type="GO" id="GO:0042110">
    <property type="term" value="P:T cell activation"/>
    <property type="evidence" value="ECO:0000303"/>
    <property type="project" value="UniProtKB"/>
</dbReference>
<dbReference type="FunFam" id="1.10.287.770:FF:000022">
    <property type="entry name" value="CD3 antigen delta polypeptide"/>
    <property type="match status" value="1"/>
</dbReference>
<dbReference type="FunFam" id="2.60.40.10:FF:001361">
    <property type="entry name" value="T-cell surface glycoprotein CD3 delta chain"/>
    <property type="match status" value="1"/>
</dbReference>
<dbReference type="Gene3D" id="2.60.40.10">
    <property type="entry name" value="Immunoglobulins"/>
    <property type="match status" value="1"/>
</dbReference>
<dbReference type="Gene3D" id="1.10.287.770">
    <property type="entry name" value="YojJ-like"/>
    <property type="match status" value="1"/>
</dbReference>
<dbReference type="InterPro" id="IPR015484">
    <property type="entry name" value="CD3_esu/gsu/dsu"/>
</dbReference>
<dbReference type="InterPro" id="IPR036179">
    <property type="entry name" value="Ig-like_dom_sf"/>
</dbReference>
<dbReference type="InterPro" id="IPR013783">
    <property type="entry name" value="Ig-like_fold"/>
</dbReference>
<dbReference type="InterPro" id="IPR032052">
    <property type="entry name" value="Ig_4"/>
</dbReference>
<dbReference type="InterPro" id="IPR003110">
    <property type="entry name" value="Phos_immunorcpt_sig_ITAM"/>
</dbReference>
<dbReference type="PANTHER" id="PTHR10570:SF5">
    <property type="entry name" value="T-CELL SURFACE GLYCOPROTEIN CD3 DELTA CHAIN"/>
    <property type="match status" value="1"/>
</dbReference>
<dbReference type="PANTHER" id="PTHR10570">
    <property type="entry name" value="T-CELL SURFACE GLYCOPROTEIN CD3 GAMMA CHAIN / DELTA CHAIN"/>
    <property type="match status" value="1"/>
</dbReference>
<dbReference type="Pfam" id="PF16680">
    <property type="entry name" value="Ig_4"/>
    <property type="match status" value="1"/>
</dbReference>
<dbReference type="Pfam" id="PF02189">
    <property type="entry name" value="ITAM"/>
    <property type="match status" value="1"/>
</dbReference>
<dbReference type="SMART" id="SM00077">
    <property type="entry name" value="ITAM"/>
    <property type="match status" value="1"/>
</dbReference>
<dbReference type="SUPFAM" id="SSF48726">
    <property type="entry name" value="Immunoglobulin"/>
    <property type="match status" value="1"/>
</dbReference>
<dbReference type="PROSITE" id="PS51055">
    <property type="entry name" value="ITAM_1"/>
    <property type="match status" value="1"/>
</dbReference>
<gene>
    <name type="primary">Cd3d</name>
    <name type="synonym">T3d</name>
</gene>
<sequence length="173" mass="19032">MEHSGILASLILIAVLPQGSPFKIQVTEYEDKVFVTCNTSVMHLDGTVEGWFAKNKTLNLGKGVLDPRGIYLCNGTEQLAKVVSSVQVHYRMCQNCVELDSGTMAGVIFIDLIATLLLALGVYCFAGHETGRPSGAAEVQALLKNEQLYQPLRDREDTQYSRLGGNWPRNKKS</sequence>
<evidence type="ECO:0000250" key="1"/>
<evidence type="ECO:0000250" key="2">
    <source>
        <dbReference type="UniProtKB" id="P04234"/>
    </source>
</evidence>
<evidence type="ECO:0000255" key="3"/>
<evidence type="ECO:0000255" key="4">
    <source>
        <dbReference type="PROSITE-ProRule" id="PRU00379"/>
    </source>
</evidence>
<evidence type="ECO:0000269" key="5">
    <source>
    </source>
</evidence>
<evidence type="ECO:0000269" key="6">
    <source>
    </source>
</evidence>
<reference key="1">
    <citation type="journal article" date="1986" name="Proc. Natl. Acad. Sci. U.S.A.">
        <title>Exon/intron organization of the genes coding for the delta chains of the human and murine T-cell receptor/T3 complex.</title>
        <authorList>
            <person name="van den Elsen P."/>
            <person name="Georgopoulos K."/>
            <person name="Shepley B.-A."/>
            <person name="Orkin S."/>
            <person name="Terhorst C."/>
        </authorList>
    </citation>
    <scope>NUCLEOTIDE SEQUENCE [GENOMIC DNA]</scope>
</reference>
<reference key="2">
    <citation type="journal article" date="1987" name="Proc. Natl. Acad. Sci. U.S.A.">
        <title>Close linkage of the mouse and human CD3 gamma- and delta-chain genes suggests that their transcription is controlled by common regulatory elements.</title>
        <authorList>
            <person name="Saito H."/>
            <person name="Koyama T."/>
            <person name="Georgopoulos K."/>
            <person name="Clevers H."/>
            <person name="Haser W.G."/>
            <person name="Lebien T."/>
            <person name="Tonegawa S."/>
            <person name="Terhorst C."/>
        </authorList>
    </citation>
    <scope>NUCLEOTIDE SEQUENCE [GENOMIC DNA] OF 1-18</scope>
    <source>
        <strain>BALB/cJ</strain>
        <tissue>Liver</tissue>
    </source>
</reference>
<reference key="3">
    <citation type="journal article" date="2000" name="Nature">
        <title>CD3delta couples T-cell receptor signalling to ERK activation and thymocyte positive selection.</title>
        <authorList>
            <person name="Delgado P."/>
            <person name="Fernandez E."/>
            <person name="Dave V."/>
            <person name="Kappes D."/>
            <person name="Alarcon B."/>
        </authorList>
    </citation>
    <scope>FUNCTION</scope>
    <scope>DISRUPTION PHENOTYPE</scope>
</reference>
<reference key="4">
    <citation type="journal article" date="2004" name="J. Biol. Chem.">
        <title>Biochemical evidence for the presence of a single CD3delta and CD3gamma chain in the surface T cell receptor/CD3 complex.</title>
        <authorList>
            <person name="Pan Q."/>
            <person name="Gollapudi A.S."/>
            <person name="Dave V.P."/>
        </authorList>
    </citation>
    <scope>SUBUNIT</scope>
    <scope>TISSUE SPECIFICITY</scope>
</reference>
<organism>
    <name type="scientific">Mus musculus</name>
    <name type="common">Mouse</name>
    <dbReference type="NCBI Taxonomy" id="10090"/>
    <lineage>
        <taxon>Eukaryota</taxon>
        <taxon>Metazoa</taxon>
        <taxon>Chordata</taxon>
        <taxon>Craniata</taxon>
        <taxon>Vertebrata</taxon>
        <taxon>Euteleostomi</taxon>
        <taxon>Mammalia</taxon>
        <taxon>Eutheria</taxon>
        <taxon>Euarchontoglires</taxon>
        <taxon>Glires</taxon>
        <taxon>Rodentia</taxon>
        <taxon>Myomorpha</taxon>
        <taxon>Muroidea</taxon>
        <taxon>Muridae</taxon>
        <taxon>Murinae</taxon>
        <taxon>Mus</taxon>
        <taxon>Mus</taxon>
    </lineage>
</organism>
<protein>
    <recommendedName>
        <fullName>T-cell surface glycoprotein CD3 delta chain</fullName>
    </recommendedName>
    <alternativeName>
        <fullName>T-cell receptor T3 delta chain</fullName>
    </alternativeName>
    <cdAntigenName>CD3d</cdAntigenName>
</protein>
<comment type="function">
    <text evidence="2 5">Part of the TCR-CD3 complex present on T-lymphocyte cell surface that plays an essential role in adaptive immune response. When antigen presenting cells (APCs) activate T-cell receptor (TCR), TCR-mediated signals are transmitted across the cell membrane by the CD3 chains CD3D, CD3E, CD3G and CD3Z. All CD3 chains contain immunoreceptor tyrosine-based activation motifs (ITAMs) in their cytoplasmic domain. Upon TCR engagement, these motifs become phosphorylated by Src family protein tyrosine kinases LCK and FYN, resulting in the activation of downstream signaling pathways. In addition of this role of signal transduction in T-cell activation, CD3D plays an essential role in thymocyte differentiation. Indeed, participates in correct intracellular TCR-CD3 complex assembly and surface expression. In absence of a functional TCR-CD3 complex, thymocytes are unable to differentiate properly (PubMed:10935641). Interacts with CD4 and CD8 and thus serves to establish a functional link between the TCR and coreceptors CD4 and CD8, which is needed for activation and positive selection of CD4 or CD8 T-cells.</text>
</comment>
<comment type="subunit">
    <text evidence="2 6">The TCR-CD3 complex is composed of a CD3D/CD3E and a CD3G/CD3E heterodimers that preferentially associate with TCRalpha and TCRbeta, respectively, to form TCRalpha/CD3E/CD3G and TCRbeta/CD3G/CD3E trimers. In turn, the hexamer interacts with CD3Z homodimer to form the TCR-CD3 complex. Alternatively, TCRalpha and TCRbeta can be replaced by TCRgamma and TCRdelta. Interacts with coreceptors CD4 and CD8.</text>
</comment>
<comment type="subcellular location">
    <subcellularLocation>
        <location>Membrane</location>
        <topology>Single-pass type I membrane protein</topology>
    </subcellularLocation>
</comment>
<comment type="PTM">
    <text evidence="2">Phosphorylated on Tyr residues after T-cell receptor triggering by LCK in association with CD4/CD8.</text>
</comment>
<comment type="disruption phenotype">
    <text evidence="5">Thymocyte development in mice lacking CD3D is arrested at the double-positive stage with markedly diminished TCR expression. Thymocytes are defective in the induction of ERK pathway upon TCR engagement, whereas activation of other MAP kinases is unaffected.</text>
</comment>
<feature type="signal peptide">
    <location>
        <begin position="1"/>
        <end position="21"/>
    </location>
</feature>
<feature type="chain" id="PRO_0000016489" description="T-cell surface glycoprotein CD3 delta chain">
    <location>
        <begin position="22"/>
        <end position="173"/>
    </location>
</feature>
<feature type="topological domain" description="Extracellular" evidence="3">
    <location>
        <begin position="22"/>
        <end position="105"/>
    </location>
</feature>
<feature type="transmembrane region" description="Helical" evidence="3">
    <location>
        <begin position="106"/>
        <end position="126"/>
    </location>
</feature>
<feature type="topological domain" description="Cytoplasmic" evidence="3">
    <location>
        <begin position="127"/>
        <end position="173"/>
    </location>
</feature>
<feature type="domain" description="ITAM" evidence="4">
    <location>
        <begin position="138"/>
        <end position="166"/>
    </location>
</feature>
<feature type="modified residue" description="Phosphotyrosine" evidence="2 4">
    <location>
        <position position="149"/>
    </location>
</feature>
<feature type="modified residue" description="Phosphotyrosine" evidence="2 4">
    <location>
        <position position="160"/>
    </location>
</feature>
<feature type="glycosylation site" description="N-linked (GlcNAc...) asparagine" evidence="3">
    <location>
        <position position="38"/>
    </location>
</feature>
<feature type="glycosylation site" description="N-linked (GlcNAc...) asparagine" evidence="3">
    <location>
        <position position="55"/>
    </location>
</feature>
<feature type="glycosylation site" description="N-linked (GlcNAc...) asparagine" evidence="3">
    <location>
        <position position="74"/>
    </location>
</feature>
<feature type="disulfide bond" evidence="1">
    <location>
        <begin position="37"/>
        <end position="73"/>
    </location>
</feature>
<accession>P04235</accession>
<proteinExistence type="evidence at protein level"/>
<keyword id="KW-1064">Adaptive immunity</keyword>
<keyword id="KW-1015">Disulfide bond</keyword>
<keyword id="KW-0325">Glycoprotein</keyword>
<keyword id="KW-0391">Immunity</keyword>
<keyword id="KW-0472">Membrane</keyword>
<keyword id="KW-0597">Phosphoprotein</keyword>
<keyword id="KW-0675">Receptor</keyword>
<keyword id="KW-1185">Reference proteome</keyword>
<keyword id="KW-0732">Signal</keyword>
<keyword id="KW-0812">Transmembrane</keyword>
<keyword id="KW-1133">Transmembrane helix</keyword>